<keyword id="KW-0002">3D-structure</keyword>
<keyword id="KW-0903">Direct protein sequencing</keyword>
<keyword id="KW-1015">Disulfide bond</keyword>
<keyword id="KW-0378">Hydrolase</keyword>
<keyword id="KW-0645">Protease</keyword>
<keyword id="KW-0732">Signal</keyword>
<keyword id="KW-0788">Thiol protease</keyword>
<keyword id="KW-0865">Zymogen</keyword>
<accession>P80884</accession>
<accession>O22293</accession>
<proteinExistence type="evidence at protein level"/>
<comment type="function">
    <text evidence="5">Cysteine protease (PubMed:31306685). Displays a high level of diversity in substrate specificity at the P1-P1' cleavage site (PubMed:31306685). A hydrophilic P1 residue is preferred, with Gln or Arg strongly preferred (PubMed:31306685). Favors an Ile/Leu residue at the P2 position of substrates, with an overall higher preference for Leu (PubMed:31306685). The optimal tripeptide for cleavage is Pro-Leu-Gln, with cleavage occurring after the Gln residue (PubMed:31306685). Another optimal tripeptide is Val-Leu-Arg, which may imply that a hydrophobic residue at the P3 position of substrates is preferred (PubMed:31306685).</text>
</comment>
<comment type="catalytic activity">
    <reaction evidence="5">
        <text>Hydrolysis of proteins with broad specificity for peptide bonds. Best reported small molecule substrate Bz-Phe-Val-Arg-|-NHMec, but broader specificity than fruit bromelain.</text>
        <dbReference type="EC" id="3.4.22.31"/>
    </reaction>
</comment>
<comment type="activity regulation">
    <text evidence="5 9">Strongly inhibited by chicken egg-white cystatin (Probable). Inhibited by iodoacetamide and the active-site-directed inhibitor E64 (L-trans-epoxysuccinyl-leucylamide-(4-guanido)-butane) (PubMed:31306685).</text>
</comment>
<comment type="biophysicochemical properties">
    <kinetics>
        <KM evidence="5">10.5 uM for synthetic 7-amino-4-methylcoumarin (AMC) substrate Z-Phe-Val-Arg-AMC (at pH 5.0 and 37 degrees Celsius)</KM>
        <KM evidence="5">18 uM for synthetic 7-amino-4-methylcoumarin (AMC) substrate Z-Phe-Arg-AMC (at pH 5.0 and 37 degrees Celsius)</KM>
        <KM evidence="5">198 uM for synthetic 7-amino-4-methylcoumarin (AMC) substrate Z-Arg-Arg-AMC (at pH 5.0 and 37 degrees Celsius)</KM>
        <KM evidence="5">5.92 uM for tripeptidyl substrate Pro-Leu-Gln (at pH 7.4 and 37 degrees Celsius)</KM>
        <KM evidence="5">4.29 uM for tripeptidyl substrate Val-Leu-Arg (at pH 7.4 and 37 degrees Celsius)</KM>
        <KM evidence="5">3.94 uM for tripeptidyl substrate Pro-Leu-Arg (at pH 7.4 and 37 degrees Celsius)</KM>
        <KM evidence="5">4.15 uM for tripeptidyl substrate Ala-Leu-Arg (at pH 7.4 and 37 degrees Celsius)</KM>
        <KM evidence="5">5.36 uM for tripeptidyl substrate Val-Leu-Lys (at pH 7.4 and 37 degrees Celsius)</KM>
        <KM evidence="5">6.94 uM for tripeptidyl substrate Pro-Leu-Lys (at pH 7.4 and 37 degrees Celsius)</KM>
        <KM evidence="5">5.85 uM for tripeptidyl substrate Ala-Leu-Lys (at pH 7.4 and 37 degrees Celsius)</KM>
        <KM evidence="5">4.5 uM for tripeptidyl substrate Pro-Leu-Asn (at pH 7.4 and 37 degrees Celsius)</KM>
        <text evidence="5">kcat is 13.9 sec(-1) for Z-Phe-Val-Arg-AMC. kcat is 1.58 sec(-1) for Z-Phe-Arg-AMC. kcat is 0.16 sec(-1) for Z-Arg-Arg-AMC. kcat is 9.80 sec(-1) for Pro-Leu-Gln. kcat is 7.13 sec(-1) for Val-Leu-Arg. kcat is 5.62 sec(-1) for Pro-Leu-Arg. kcat is 4.96 sec(-1) for Ala-Leu-Arg. kcat is 6.29 sec(-1) for Val-Leu-Lys. kcat is 6.08 sec(-1) for Pro-Leu-Lys. kcat is 3.58 sec(-1) for Ala-Leu-Lys. kcat is 0.36 sec(-1) for Pro-Leu-Asn.</text>
    </kinetics>
</comment>
<comment type="tissue specificity">
    <text evidence="5">Stem (at protein level).</text>
</comment>
<comment type="mass spectrometry" mass="23478.0" method="Electrospray" evidence="6"/>
<comment type="similarity">
    <text evidence="2 3 4">Belongs to the peptidase C1 family.</text>
</comment>
<dbReference type="EC" id="3.4.22.31" evidence="5"/>
<dbReference type="EMBL" id="AJ002477">
    <property type="protein sequence ID" value="CAA05487.1"/>
    <property type="molecule type" value="mRNA"/>
</dbReference>
<dbReference type="PIR" id="T07839">
    <property type="entry name" value="T07839"/>
</dbReference>
<dbReference type="RefSeq" id="XP_020089326.1">
    <property type="nucleotide sequence ID" value="XM_020233737.1"/>
</dbReference>
<dbReference type="PDB" id="6MIS">
    <property type="method" value="X-ray"/>
    <property type="resolution" value="1.98 A"/>
    <property type="chains" value="A/B=123-337"/>
</dbReference>
<dbReference type="PDB" id="6OKJ">
    <property type="method" value="X-ray"/>
    <property type="resolution" value="1.73 A"/>
    <property type="chains" value="A/B=123-337"/>
</dbReference>
<dbReference type="PDB" id="6Y6L">
    <property type="method" value="X-ray"/>
    <property type="resolution" value="1.30 A"/>
    <property type="chains" value="A/B=123-338"/>
</dbReference>
<dbReference type="PDB" id="6YCB">
    <property type="method" value="X-ray"/>
    <property type="resolution" value="1.26 A"/>
    <property type="chains" value="A/B=123-338"/>
</dbReference>
<dbReference type="PDB" id="6YCC">
    <property type="method" value="X-ray"/>
    <property type="resolution" value="1.30 A"/>
    <property type="chains" value="A/B=123-338"/>
</dbReference>
<dbReference type="PDB" id="6YCD">
    <property type="method" value="X-ray"/>
    <property type="resolution" value="1.35 A"/>
    <property type="chains" value="A/B=123-338"/>
</dbReference>
<dbReference type="PDBsum" id="6MIS"/>
<dbReference type="PDBsum" id="6OKJ"/>
<dbReference type="PDBsum" id="6Y6L"/>
<dbReference type="PDBsum" id="6YCB"/>
<dbReference type="PDBsum" id="6YCC"/>
<dbReference type="PDBsum" id="6YCD"/>
<dbReference type="SMR" id="P80884"/>
<dbReference type="Allergome" id="694">
    <property type="allergen name" value="Ana c 2"/>
</dbReference>
<dbReference type="MEROPS" id="C01.026"/>
<dbReference type="GeneID" id="109710925"/>
<dbReference type="OrthoDB" id="665764at2759"/>
<dbReference type="Proteomes" id="UP000515123">
    <property type="component" value="Linkage group 5"/>
</dbReference>
<dbReference type="GO" id="GO:0008234">
    <property type="term" value="F:cysteine-type peptidase activity"/>
    <property type="evidence" value="ECO:0007669"/>
    <property type="project" value="UniProtKB-KW"/>
</dbReference>
<dbReference type="GO" id="GO:0006508">
    <property type="term" value="P:proteolysis"/>
    <property type="evidence" value="ECO:0007669"/>
    <property type="project" value="UniProtKB-KW"/>
</dbReference>
<dbReference type="CDD" id="cd02248">
    <property type="entry name" value="Peptidase_C1A"/>
    <property type="match status" value="1"/>
</dbReference>
<dbReference type="FunFam" id="3.90.70.10:FF:000067">
    <property type="entry name" value="Senescence-specific cysteine protease"/>
    <property type="match status" value="1"/>
</dbReference>
<dbReference type="Gene3D" id="3.90.70.10">
    <property type="entry name" value="Cysteine proteinases"/>
    <property type="match status" value="1"/>
</dbReference>
<dbReference type="InterPro" id="IPR038765">
    <property type="entry name" value="Papain-like_cys_pep_sf"/>
</dbReference>
<dbReference type="InterPro" id="IPR025661">
    <property type="entry name" value="Pept_asp_AS"/>
</dbReference>
<dbReference type="InterPro" id="IPR000169">
    <property type="entry name" value="Pept_cys_AS"/>
</dbReference>
<dbReference type="InterPro" id="IPR025660">
    <property type="entry name" value="Pept_his_AS"/>
</dbReference>
<dbReference type="InterPro" id="IPR013128">
    <property type="entry name" value="Peptidase_C1A"/>
</dbReference>
<dbReference type="InterPro" id="IPR000668">
    <property type="entry name" value="Peptidase_C1A_C"/>
</dbReference>
<dbReference type="InterPro" id="IPR039417">
    <property type="entry name" value="Peptidase_C1A_papain-like"/>
</dbReference>
<dbReference type="InterPro" id="IPR013201">
    <property type="entry name" value="Prot_inhib_I29"/>
</dbReference>
<dbReference type="PANTHER" id="PTHR12411">
    <property type="entry name" value="CYSTEINE PROTEASE FAMILY C1-RELATED"/>
    <property type="match status" value="1"/>
</dbReference>
<dbReference type="Pfam" id="PF08246">
    <property type="entry name" value="Inhibitor_I29"/>
    <property type="match status" value="1"/>
</dbReference>
<dbReference type="Pfam" id="PF00112">
    <property type="entry name" value="Peptidase_C1"/>
    <property type="match status" value="1"/>
</dbReference>
<dbReference type="PRINTS" id="PR00705">
    <property type="entry name" value="PAPAIN"/>
</dbReference>
<dbReference type="SMART" id="SM00848">
    <property type="entry name" value="Inhibitor_I29"/>
    <property type="match status" value="1"/>
</dbReference>
<dbReference type="SMART" id="SM00645">
    <property type="entry name" value="Pept_C1"/>
    <property type="match status" value="1"/>
</dbReference>
<dbReference type="SUPFAM" id="SSF54001">
    <property type="entry name" value="Cysteine proteinases"/>
    <property type="match status" value="1"/>
</dbReference>
<dbReference type="PROSITE" id="PS00640">
    <property type="entry name" value="THIOL_PROTEASE_ASN"/>
    <property type="match status" value="1"/>
</dbReference>
<dbReference type="PROSITE" id="PS00139">
    <property type="entry name" value="THIOL_PROTEASE_CYS"/>
    <property type="match status" value="1"/>
</dbReference>
<dbReference type="PROSITE" id="PS00639">
    <property type="entry name" value="THIOL_PROTEASE_HIS"/>
    <property type="match status" value="1"/>
</dbReference>
<evidence type="ECO:0000255" key="1"/>
<evidence type="ECO:0000255" key="2">
    <source>
        <dbReference type="PROSITE-ProRule" id="PRU10088"/>
    </source>
</evidence>
<evidence type="ECO:0000255" key="3">
    <source>
        <dbReference type="PROSITE-ProRule" id="PRU10089"/>
    </source>
</evidence>
<evidence type="ECO:0000255" key="4">
    <source>
        <dbReference type="PROSITE-ProRule" id="PRU10090"/>
    </source>
</evidence>
<evidence type="ECO:0000269" key="5">
    <source>
    </source>
</evidence>
<evidence type="ECO:0000269" key="6">
    <source>
    </source>
</evidence>
<evidence type="ECO:0000303" key="7">
    <source>
    </source>
</evidence>
<evidence type="ECO:0000303" key="8">
    <source>
    </source>
</evidence>
<evidence type="ECO:0000305" key="9"/>
<evidence type="ECO:0000305" key="10">
    <source>
    </source>
</evidence>
<evidence type="ECO:0000305" key="11">
    <source>
    </source>
</evidence>
<evidence type="ECO:0000312" key="12">
    <source>
        <dbReference type="EMBL" id="CAA05487.1"/>
    </source>
</evidence>
<evidence type="ECO:0007744" key="13">
    <source>
        <dbReference type="PDB" id="6MIS"/>
    </source>
</evidence>
<evidence type="ECO:0007744" key="14">
    <source>
        <dbReference type="PDB" id="6OKJ"/>
    </source>
</evidence>
<evidence type="ECO:0007744" key="15">
    <source>
        <dbReference type="PDB" id="6YCC"/>
    </source>
</evidence>
<evidence type="ECO:0007829" key="16">
    <source>
        <dbReference type="PDB" id="6YCB"/>
    </source>
</evidence>
<evidence type="ECO:0007829" key="17">
    <source>
        <dbReference type="PDB" id="6YCD"/>
    </source>
</evidence>
<feature type="signal peptide" evidence="1">
    <location>
        <begin position="1"/>
        <end position="24"/>
    </location>
</feature>
<feature type="propeptide" id="PRO_0000026400" description="Activation peptide" evidence="11">
    <location>
        <begin position="25"/>
        <end position="122"/>
    </location>
</feature>
<feature type="chain" id="PRO_0000026401" description="Ananain" evidence="11">
    <location>
        <begin position="123"/>
        <end position="345"/>
    </location>
</feature>
<feature type="active site" evidence="2 10">
    <location>
        <position position="147"/>
    </location>
</feature>
<feature type="active site" evidence="3 10">
    <location>
        <position position="279"/>
    </location>
</feature>
<feature type="active site" evidence="4">
    <location>
        <position position="300"/>
    </location>
</feature>
<feature type="binding site" description="covalent" evidence="5 13 15">
    <location>
        <position position="147"/>
    </location>
    <ligand>
        <name>E64</name>
        <dbReference type="ChEBI" id="CHEBI:192370"/>
        <note>inhibitor; produced by Aspergillus japonicus</note>
    </ligand>
</feature>
<feature type="disulfide bond" evidence="5 13 14">
    <location>
        <begin position="144"/>
        <end position="184"/>
    </location>
</feature>
<feature type="disulfide bond" evidence="5 13 14">
    <location>
        <begin position="178"/>
        <end position="217"/>
    </location>
</feature>
<feature type="disulfide bond" evidence="5 13 14">
    <location>
        <begin position="273"/>
        <end position="325"/>
    </location>
</feature>
<feature type="sequence conflict" description="In Ref. 2; AA sequence." evidence="9" ref="2">
    <original>S</original>
    <variation>A</variation>
    <location>
        <position position="291"/>
    </location>
</feature>
<feature type="sequence conflict" description="In Ref. 2; AA sequence." evidence="9" ref="2">
    <original>L</original>
    <variation>I</variation>
    <location>
        <position position="324"/>
    </location>
</feature>
<feature type="turn" evidence="16">
    <location>
        <begin position="129"/>
        <end position="133"/>
    </location>
</feature>
<feature type="strand" evidence="17">
    <location>
        <begin position="143"/>
        <end position="145"/>
    </location>
</feature>
<feature type="helix" evidence="16">
    <location>
        <begin position="147"/>
        <end position="164"/>
    </location>
</feature>
<feature type="helix" evidence="16">
    <location>
        <begin position="172"/>
        <end position="178"/>
    </location>
</feature>
<feature type="strand" evidence="16">
    <location>
        <begin position="179"/>
        <end position="181"/>
    </location>
</feature>
<feature type="helix" evidence="16">
    <location>
        <begin position="183"/>
        <end position="185"/>
    </location>
</feature>
<feature type="helix" evidence="16">
    <location>
        <begin position="189"/>
        <end position="198"/>
    </location>
</feature>
<feature type="turn" evidence="16">
    <location>
        <begin position="205"/>
        <end position="207"/>
    </location>
</feature>
<feature type="strand" evidence="16">
    <location>
        <begin position="229"/>
        <end position="233"/>
    </location>
</feature>
<feature type="helix" evidence="16">
    <location>
        <begin position="239"/>
        <end position="246"/>
    </location>
</feature>
<feature type="strand" evidence="16">
    <location>
        <begin position="251"/>
        <end position="255"/>
    </location>
</feature>
<feature type="helix" evidence="16">
    <location>
        <begin position="259"/>
        <end position="263"/>
    </location>
</feature>
<feature type="strand" evidence="16">
    <location>
        <begin position="266"/>
        <end position="269"/>
    </location>
</feature>
<feature type="strand" evidence="16">
    <location>
        <begin position="279"/>
        <end position="288"/>
    </location>
</feature>
<feature type="strand" evidence="16">
    <location>
        <begin position="294"/>
        <end position="299"/>
    </location>
</feature>
<feature type="strand" evidence="16">
    <location>
        <begin position="311"/>
        <end position="315"/>
    </location>
</feature>
<feature type="helix" evidence="16">
    <location>
        <begin position="324"/>
        <end position="326"/>
    </location>
</feature>
<feature type="strand" evidence="16">
    <location>
        <begin position="332"/>
        <end position="335"/>
    </location>
</feature>
<sequence length="345" mass="38248">MTSKVQLVFLFLFLCVMWASPSAASCDEPSDPMMKQFEEWMAEYGRVYKDNDEKMLRFQIFKNNVNHIETFNNRNGNSYTLGINQFTDMTNNEFVAQYTGLSLPLNIKREPVVSFDDVDISSVPQSIDWRDSGAVTSVKNQGRCGSCWAFASIATVESIYKIKRGNLVSLSEQQVLDCAVSYGCKGGWINKAYSFIISNKGVASAAIYPYKAAKGTCKTNGVPNSAYITRYTYVQRNNERNMMYAVSNQPIAAALDASGNFQHYKRGVFTGPCGTRLNHAIVIIGYGQDSSGKKFWIVRNSWGAGWGEGGYIRLARDVSSSFGLCGIAMDPLYPTLQSGPSVEVI</sequence>
<name>ANAN_ANACO</name>
<reference key="1">
    <citation type="submission" date="1997-11" db="EMBL/GenBank/DDBJ databases">
        <title>Cloning and expression of ananain gene from pineapple.</title>
        <authorList>
            <person name="Robertson C.E."/>
            <person name="Goodenough P.W."/>
        </authorList>
    </citation>
    <scope>NUCLEOTIDE SEQUENCE [MRNA]</scope>
    <source>
        <strain>cv. Smooth Cayenne</strain>
        <tissue>Stem</tissue>
    </source>
</reference>
<reference key="2">
    <citation type="journal article" date="1997" name="Biochem. J.">
        <title>Complete amino acid sequence of ananain and a comparison with stem bromelain and other plant cysteine proteases.</title>
        <authorList>
            <person name="Lee K.L."/>
            <person name="Albee K.L."/>
            <person name="Bernasconi R.J."/>
            <person name="Edmunds T."/>
        </authorList>
    </citation>
    <scope>PROTEIN SEQUENCE OF 123-338</scope>
    <scope>MASS SPECTROMETRY</scope>
    <source>
        <tissue>Stem</tissue>
    </source>
</reference>
<reference key="3">
    <citation type="journal article" date="2019" name="Biochimie">
        <title>Determination of the crystal structure and substrate specificity of ananain.</title>
        <authorList>
            <person name="Yongqing T."/>
            <person name="Wilmann P.G."/>
            <person name="Pan J."/>
            <person name="West M.L."/>
            <person name="Brown T.J."/>
            <person name="Mynott T."/>
            <person name="Pike R.N."/>
            <person name="Wijeyewickrema L.C."/>
        </authorList>
    </citation>
    <scope>X-RAY CRYSTALLOGRAPHY (1.73 ANGSTROMS) OF 123-337 AND IN COMPLEX WITH INHIBITOR</scope>
    <scope>FUNCTION</scope>
    <scope>CATALYTIC ACTIVITY</scope>
    <scope>ACTIVITY REGULATION</scope>
    <scope>BIOPHYSICOCHEMICAL PROPERTIES</scope>
    <scope>SUBSTRATE SPECIFICITY</scope>
    <scope>TISSUE SPECIFICITY</scope>
    <scope>DISULFIDE BONDS</scope>
</reference>
<gene>
    <name evidence="7 12" type="primary">AN1</name>
</gene>
<organism>
    <name type="scientific">Ananas comosus</name>
    <name type="common">Pineapple</name>
    <name type="synonym">Ananas ananas</name>
    <dbReference type="NCBI Taxonomy" id="4615"/>
    <lineage>
        <taxon>Eukaryota</taxon>
        <taxon>Viridiplantae</taxon>
        <taxon>Streptophyta</taxon>
        <taxon>Embryophyta</taxon>
        <taxon>Tracheophyta</taxon>
        <taxon>Spermatophyta</taxon>
        <taxon>Magnoliopsida</taxon>
        <taxon>Liliopsida</taxon>
        <taxon>Poales</taxon>
        <taxon>Bromeliaceae</taxon>
        <taxon>Bromelioideae</taxon>
        <taxon>Ananas</taxon>
    </lineage>
</organism>
<protein>
    <recommendedName>
        <fullName evidence="7 8">Ananain</fullName>
        <ecNumber evidence="5">3.4.22.31</ecNumber>
    </recommendedName>
</protein>